<dbReference type="EMBL" id="BX284604">
    <property type="protein sequence ID" value="CCD74150.1"/>
    <property type="molecule type" value="Genomic_DNA"/>
</dbReference>
<dbReference type="RefSeq" id="NP_500978.1">
    <property type="nucleotide sequence ID" value="NM_068577.4"/>
</dbReference>
<dbReference type="SMR" id="Q95XD0"/>
<dbReference type="FunCoup" id="Q95XD0">
    <property type="interactions" value="2972"/>
</dbReference>
<dbReference type="STRING" id="6239.Y73B6BL.3.1"/>
<dbReference type="PaxDb" id="6239-Y73B6BL.3"/>
<dbReference type="PeptideAtlas" id="Q95XD0"/>
<dbReference type="EnsemblMetazoa" id="Y73B6BL.3.1">
    <property type="protein sequence ID" value="Y73B6BL.3.1"/>
    <property type="gene ID" value="WBGene00022232"/>
</dbReference>
<dbReference type="GeneID" id="177403"/>
<dbReference type="KEGG" id="cel:CELE_Y73B6BL.3"/>
<dbReference type="UCSC" id="Y73B6BL.3">
    <property type="organism name" value="c. elegans"/>
</dbReference>
<dbReference type="AGR" id="WB:WBGene00022232"/>
<dbReference type="CTD" id="177403"/>
<dbReference type="WormBase" id="Y73B6BL.3">
    <property type="protein sequence ID" value="CE27533"/>
    <property type="gene ID" value="WBGene00022232"/>
    <property type="gene designation" value="exos-2"/>
</dbReference>
<dbReference type="eggNOG" id="KOG3013">
    <property type="taxonomic scope" value="Eukaryota"/>
</dbReference>
<dbReference type="GeneTree" id="ENSGT00940000153596"/>
<dbReference type="HOGENOM" id="CLU_034114_3_0_1"/>
<dbReference type="InParanoid" id="Q95XD0"/>
<dbReference type="OMA" id="MNMPDGV"/>
<dbReference type="OrthoDB" id="1650at2759"/>
<dbReference type="PhylomeDB" id="Q95XD0"/>
<dbReference type="Reactome" id="R-CEL-429958">
    <property type="pathway name" value="mRNA decay by 3' to 5' exoribonuclease"/>
</dbReference>
<dbReference type="Reactome" id="R-CEL-450385">
    <property type="pathway name" value="Butyrate Response Factor 1 (BRF1) binds and destabilizes mRNA"/>
</dbReference>
<dbReference type="Reactome" id="R-CEL-450513">
    <property type="pathway name" value="Tristetraprolin (TTP, ZFP36) binds and destabilizes mRNA"/>
</dbReference>
<dbReference type="Reactome" id="R-CEL-6791226">
    <property type="pathway name" value="Major pathway of rRNA processing in the nucleolus and cytosol"/>
</dbReference>
<dbReference type="PRO" id="PR:Q95XD0"/>
<dbReference type="Proteomes" id="UP000001940">
    <property type="component" value="Chromosome IV"/>
</dbReference>
<dbReference type="Bgee" id="WBGene00022232">
    <property type="expression patterns" value="Expressed in germ line (C elegans) and 4 other cell types or tissues"/>
</dbReference>
<dbReference type="GO" id="GO:0005737">
    <property type="term" value="C:cytoplasm"/>
    <property type="evidence" value="ECO:0000314"/>
    <property type="project" value="WormBase"/>
</dbReference>
<dbReference type="GO" id="GO:0000177">
    <property type="term" value="C:cytoplasmic exosome (RNase complex)"/>
    <property type="evidence" value="ECO:0000318"/>
    <property type="project" value="GO_Central"/>
</dbReference>
<dbReference type="GO" id="GO:0000176">
    <property type="term" value="C:nuclear exosome (RNase complex)"/>
    <property type="evidence" value="ECO:0000318"/>
    <property type="project" value="GO_Central"/>
</dbReference>
<dbReference type="GO" id="GO:0005730">
    <property type="term" value="C:nucleolus"/>
    <property type="evidence" value="ECO:0007669"/>
    <property type="project" value="UniProtKB-SubCell"/>
</dbReference>
<dbReference type="GO" id="GO:0005654">
    <property type="term" value="C:nucleoplasm"/>
    <property type="evidence" value="ECO:0007669"/>
    <property type="project" value="UniProtKB-SubCell"/>
</dbReference>
<dbReference type="GO" id="GO:0005634">
    <property type="term" value="C:nucleus"/>
    <property type="evidence" value="ECO:0000314"/>
    <property type="project" value="WormBase"/>
</dbReference>
<dbReference type="GO" id="GO:0003723">
    <property type="term" value="F:RNA binding"/>
    <property type="evidence" value="ECO:0000318"/>
    <property type="project" value="GO_Central"/>
</dbReference>
<dbReference type="GO" id="GO:0071034">
    <property type="term" value="P:CUT catabolic process"/>
    <property type="evidence" value="ECO:0000318"/>
    <property type="project" value="GO_Central"/>
</dbReference>
<dbReference type="GO" id="GO:0000467">
    <property type="term" value="P:exonucleolytic trimming to generate mature 3'-end of 5.8S rRNA from tricistronic rRNA transcript (SSU-rRNA, 5.8S rRNA, LSU-rRNA)"/>
    <property type="evidence" value="ECO:0000318"/>
    <property type="project" value="GO_Central"/>
</dbReference>
<dbReference type="GO" id="GO:0071035">
    <property type="term" value="P:nuclear polyadenylation-dependent rRNA catabolic process"/>
    <property type="evidence" value="ECO:0000318"/>
    <property type="project" value="GO_Central"/>
</dbReference>
<dbReference type="GO" id="GO:0000956">
    <property type="term" value="P:nuclear-transcribed mRNA catabolic process"/>
    <property type="evidence" value="ECO:0000318"/>
    <property type="project" value="GO_Central"/>
</dbReference>
<dbReference type="GO" id="GO:0071051">
    <property type="term" value="P:poly(A)-dependent snoRNA 3'-end processing"/>
    <property type="evidence" value="ECO:0000318"/>
    <property type="project" value="GO_Central"/>
</dbReference>
<dbReference type="GO" id="GO:0071038">
    <property type="term" value="P:TRAMP-dependent tRNA surveillance pathway"/>
    <property type="evidence" value="ECO:0000318"/>
    <property type="project" value="GO_Central"/>
</dbReference>
<dbReference type="GO" id="GO:0034475">
    <property type="term" value="P:U4 snRNA 3'-end processing"/>
    <property type="evidence" value="ECO:0000318"/>
    <property type="project" value="GO_Central"/>
</dbReference>
<dbReference type="CDD" id="cd22525">
    <property type="entry name" value="KH-I_Rrp4_eukar"/>
    <property type="match status" value="1"/>
</dbReference>
<dbReference type="CDD" id="cd05789">
    <property type="entry name" value="S1_Rrp4"/>
    <property type="match status" value="1"/>
</dbReference>
<dbReference type="FunFam" id="2.40.50.140:FF:000038">
    <property type="entry name" value="Exosome complex component RRP4"/>
    <property type="match status" value="1"/>
</dbReference>
<dbReference type="Gene3D" id="2.40.50.100">
    <property type="match status" value="1"/>
</dbReference>
<dbReference type="Gene3D" id="2.40.50.140">
    <property type="entry name" value="Nucleic acid-binding proteins"/>
    <property type="match status" value="1"/>
</dbReference>
<dbReference type="InterPro" id="IPR025721">
    <property type="entry name" value="Exosome_cplx_N_dom"/>
</dbReference>
<dbReference type="InterPro" id="IPR026699">
    <property type="entry name" value="Exosome_RNA_bind1/RRP40/RRP4"/>
</dbReference>
<dbReference type="InterPro" id="IPR004088">
    <property type="entry name" value="KH_dom_type_1"/>
</dbReference>
<dbReference type="InterPro" id="IPR036612">
    <property type="entry name" value="KH_dom_type_1_sf"/>
</dbReference>
<dbReference type="InterPro" id="IPR012340">
    <property type="entry name" value="NA-bd_OB-fold"/>
</dbReference>
<dbReference type="InterPro" id="IPR048565">
    <property type="entry name" value="RRP4_S1"/>
</dbReference>
<dbReference type="PANTHER" id="PTHR21321:SF4">
    <property type="entry name" value="EXOSOME COMPLEX COMPONENT RRP4"/>
    <property type="match status" value="1"/>
</dbReference>
<dbReference type="PANTHER" id="PTHR21321">
    <property type="entry name" value="PNAS-3 RELATED"/>
    <property type="match status" value="1"/>
</dbReference>
<dbReference type="Pfam" id="PF14382">
    <property type="entry name" value="ECR1_N"/>
    <property type="match status" value="1"/>
</dbReference>
<dbReference type="Pfam" id="PF15985">
    <property type="entry name" value="KH_6"/>
    <property type="match status" value="1"/>
</dbReference>
<dbReference type="Pfam" id="PF21266">
    <property type="entry name" value="RRP4_S1"/>
    <property type="match status" value="1"/>
</dbReference>
<dbReference type="SUPFAM" id="SSF54791">
    <property type="entry name" value="Eukaryotic type KH-domain (KH-domain type I)"/>
    <property type="match status" value="1"/>
</dbReference>
<dbReference type="SUPFAM" id="SSF50249">
    <property type="entry name" value="Nucleic acid-binding proteins"/>
    <property type="match status" value="1"/>
</dbReference>
<dbReference type="SUPFAM" id="SSF110324">
    <property type="entry name" value="Ribosomal L27 protein-like"/>
    <property type="match status" value="1"/>
</dbReference>
<evidence type="ECO:0000250" key="1">
    <source>
        <dbReference type="UniProtKB" id="Q13868"/>
    </source>
</evidence>
<evidence type="ECO:0000255" key="2"/>
<evidence type="ECO:0000269" key="3">
    <source>
    </source>
</evidence>
<evidence type="ECO:0000269" key="4">
    <source>
    </source>
</evidence>
<evidence type="ECO:0000305" key="5"/>
<evidence type="ECO:0000312" key="6">
    <source>
        <dbReference type="Proteomes" id="UP000001940"/>
    </source>
</evidence>
<evidence type="ECO:0000312" key="7">
    <source>
        <dbReference type="WormBase" id="Y73B6BL.3"/>
    </source>
</evidence>
<gene>
    <name evidence="7" type="primary">exos-2</name>
    <name evidence="7" type="ORF">Y73B6BL.3</name>
</gene>
<organism evidence="6">
    <name type="scientific">Caenorhabditis elegans</name>
    <dbReference type="NCBI Taxonomy" id="6239"/>
    <lineage>
        <taxon>Eukaryota</taxon>
        <taxon>Metazoa</taxon>
        <taxon>Ecdysozoa</taxon>
        <taxon>Nematoda</taxon>
        <taxon>Chromadorea</taxon>
        <taxon>Rhabditida</taxon>
        <taxon>Rhabditina</taxon>
        <taxon>Rhabditomorpha</taxon>
        <taxon>Rhabditoidea</taxon>
        <taxon>Rhabditidae</taxon>
        <taxon>Peloderinae</taxon>
        <taxon>Caenorhabditis</taxon>
    </lineage>
</organism>
<feature type="chain" id="PRO_0000459066" description="Exosome complex component RRP4 homolog">
    <location>
        <begin position="1"/>
        <end position="303"/>
    </location>
</feature>
<feature type="domain" description="KH" evidence="2">
    <location>
        <begin position="175"/>
        <end position="213"/>
    </location>
</feature>
<protein>
    <recommendedName>
        <fullName evidence="5">Exosome complex component RRP4 homolog</fullName>
    </recommendedName>
</protein>
<accession>Q95XD0</accession>
<comment type="function">
    <text evidence="1 3 4">Non-catalytic component of the RNA exosome complex which has 3'-&gt;5' exoribonuclease activity and participates in a multitude of cellular RNA processing and degradation events (By similarity). Involved in regulation of antisense ribosomal siRNA production (PubMed:34365510). Involved in response to cold-warm shock (PubMed:36763670).</text>
</comment>
<comment type="subunit">
    <text evidence="1">Component of the RNA exosome complex.</text>
</comment>
<comment type="subcellular location">
    <subcellularLocation>
        <location evidence="3 4">Nucleus</location>
    </subcellularLocation>
    <subcellularLocation>
        <location evidence="3 4">Nucleus</location>
        <location evidence="3 4">Nucleolus</location>
    </subcellularLocation>
    <subcellularLocation>
        <location evidence="4">Nucleus</location>
        <location evidence="4">Nucleoplasm</location>
    </subcellularLocation>
    <text evidence="4">As a part of exosome complex, translocates from the nucleolus to nucleoplasm in response to cold-warm shock.</text>
</comment>
<comment type="tissue specificity">
    <text evidence="3">Ubiquitously expressed.</text>
</comment>
<comment type="similarity">
    <text evidence="5">Belongs to the RRP4 family.</text>
</comment>
<keyword id="KW-0271">Exosome</keyword>
<keyword id="KW-0539">Nucleus</keyword>
<keyword id="KW-1185">Reference proteome</keyword>
<keyword id="KW-0694">RNA-binding</keyword>
<keyword id="KW-0698">rRNA processing</keyword>
<proteinExistence type="evidence at transcript level"/>
<reference evidence="6" key="1">
    <citation type="journal article" date="1998" name="Science">
        <title>Genome sequence of the nematode C. elegans: a platform for investigating biology.</title>
        <authorList>
            <consortium name="The C. elegans sequencing consortium"/>
        </authorList>
    </citation>
    <scope>NUCLEOTIDE SEQUENCE [LARGE SCALE GENOMIC DNA]</scope>
    <source>
        <strain evidence="6">Bristol N2</strain>
    </source>
</reference>
<reference evidence="5" key="2">
    <citation type="journal article" date="2021" name="Nucleic Acids Res.">
        <title>Antisense ribosomal siRNAs inhibit RNA polymerase I-directed transcription in C. elegans.</title>
        <authorList>
            <person name="Liao S."/>
            <person name="Chen X."/>
            <person name="Xu T."/>
            <person name="Jin Q."/>
            <person name="Xu Z."/>
            <person name="Xu D."/>
            <person name="Zhou X."/>
            <person name="Zhu C."/>
            <person name="Guang S."/>
            <person name="Feng X."/>
        </authorList>
    </citation>
    <scope>FUNCTION</scope>
    <scope>SUBCELLULAR LOCATION</scope>
    <scope>TISSUE SPECIFICITY</scope>
</reference>
<reference evidence="5" key="3">
    <citation type="journal article" date="2023" name="PLoS Genet.">
        <title>A ZTF-7/RPS-2 complex mediates the cold-warm response in C. elegans.</title>
        <authorList>
            <person name="Xu T."/>
            <person name="Liao S."/>
            <person name="Huang M."/>
            <person name="Zhu C."/>
            <person name="Huang X."/>
            <person name="Jin Q."/>
            <person name="Xu D."/>
            <person name="Fu C."/>
            <person name="Chen X."/>
            <person name="Feng X."/>
            <person name="Guang S."/>
        </authorList>
    </citation>
    <scope>FUNCTION</scope>
    <scope>SUBCELLULAR LOCATION</scope>
</reference>
<name>EXOS2_CAEEL</name>
<sequence length="303" mass="34093">MSFEVTGPPLVSPWMMLSMSEARNDIDETKIVIPGHSVCDAPQQFMRGHGTYVRDGEIVSSLSGVVQQLNRLLMVKTIKQRYAGEVGDVVVARVVEVQAKRWKCDVASRLHANLPLGSVLLPGGDFRRKDVEDEEKMSEFLKNGELICAEVQQVQHDGTLMLHTRNNKYGKLQQGILIKVPPHLIKKSKKHFHTLPYGMAVIIGCNGSVWVTPSLPETTLEEDGSHVHEFQIVPPDVRVTMVRIAACVRLLRDYSISIYLNSLTTCYEMSQPYEIKELAEQDTSSRLAYLIAARLLQELQQQK</sequence>